<accession>P94568</accession>
<protein>
    <recommendedName>
        <fullName>3-isopropylmalate dehydratase small subunit</fullName>
        <ecNumber>4.2.1.33</ecNumber>
    </recommendedName>
    <alternativeName>
        <fullName>Alpha-IPM isomerase</fullName>
        <shortName>IPMI</shortName>
    </alternativeName>
    <alternativeName>
        <fullName>Isopropylmalate isomerase</fullName>
    </alternativeName>
</protein>
<sequence>MEPLKSHTGKAAVLNRINVDTDQIIPKQFLKRIERTGYGRFAFFDWRYDANGEPNPEFELNQPVYQGASILIAGENFGCGSSREHAPWALDDYGFKIIIAPSFADIFHQNCFKNGMLPIRMPYDNWKQLVGQYENQSLQMTVDLENQLIHDSEGNQISFEVDPHWKEMLINGYDEISLTLLLEDEIKQFESQRSSWLQA</sequence>
<comment type="function">
    <text evidence="1">Catalyzes the isomerization between 2-isopropylmalate and 3-isopropylmalate, via the formation of 2-isopropylmaleate.</text>
</comment>
<comment type="catalytic activity">
    <reaction>
        <text>(2R,3S)-3-isopropylmalate = (2S)-2-isopropylmalate</text>
        <dbReference type="Rhea" id="RHEA:32287"/>
        <dbReference type="ChEBI" id="CHEBI:1178"/>
        <dbReference type="ChEBI" id="CHEBI:35121"/>
        <dbReference type="EC" id="4.2.1.33"/>
    </reaction>
</comment>
<comment type="pathway">
    <text>Amino-acid biosynthesis; L-leucine biosynthesis; L-leucine from 3-methyl-2-oxobutanoate: step 2/4.</text>
</comment>
<comment type="subunit">
    <text evidence="1">Heterodimer of LeuC and LeuD.</text>
</comment>
<comment type="similarity">
    <text evidence="2">Belongs to the LeuD family. LeuD type 1 subfamily.</text>
</comment>
<dbReference type="EC" id="4.2.1.33"/>
<dbReference type="EMBL" id="Z75208">
    <property type="protein sequence ID" value="CAA99534.1"/>
    <property type="molecule type" value="Genomic_DNA"/>
</dbReference>
<dbReference type="EMBL" id="AL009126">
    <property type="protein sequence ID" value="CAB14785.1"/>
    <property type="molecule type" value="Genomic_DNA"/>
</dbReference>
<dbReference type="PIR" id="C69650">
    <property type="entry name" value="C69650"/>
</dbReference>
<dbReference type="RefSeq" id="NP_390703.1">
    <property type="nucleotide sequence ID" value="NC_000964.3"/>
</dbReference>
<dbReference type="RefSeq" id="WP_003229606.1">
    <property type="nucleotide sequence ID" value="NZ_OZ025638.1"/>
</dbReference>
<dbReference type="SMR" id="P94568"/>
<dbReference type="FunCoup" id="P94568">
    <property type="interactions" value="529"/>
</dbReference>
<dbReference type="STRING" id="224308.BSU28250"/>
<dbReference type="PaxDb" id="224308-BSU28250"/>
<dbReference type="EnsemblBacteria" id="CAB14785">
    <property type="protein sequence ID" value="CAB14785"/>
    <property type="gene ID" value="BSU_28250"/>
</dbReference>
<dbReference type="GeneID" id="937683"/>
<dbReference type="KEGG" id="bsu:BSU28250"/>
<dbReference type="PATRIC" id="fig|224308.179.peg.3069"/>
<dbReference type="eggNOG" id="COG0066">
    <property type="taxonomic scope" value="Bacteria"/>
</dbReference>
<dbReference type="InParanoid" id="P94568"/>
<dbReference type="OrthoDB" id="9777465at2"/>
<dbReference type="PhylomeDB" id="P94568"/>
<dbReference type="BioCyc" id="BSUB:BSU28250-MONOMER"/>
<dbReference type="UniPathway" id="UPA00048">
    <property type="reaction ID" value="UER00071"/>
</dbReference>
<dbReference type="Proteomes" id="UP000001570">
    <property type="component" value="Chromosome"/>
</dbReference>
<dbReference type="GO" id="GO:0009316">
    <property type="term" value="C:3-isopropylmalate dehydratase complex"/>
    <property type="evidence" value="ECO:0007669"/>
    <property type="project" value="InterPro"/>
</dbReference>
<dbReference type="GO" id="GO:0003861">
    <property type="term" value="F:3-isopropylmalate dehydratase activity"/>
    <property type="evidence" value="ECO:0007669"/>
    <property type="project" value="UniProtKB-UniRule"/>
</dbReference>
<dbReference type="GO" id="GO:0009098">
    <property type="term" value="P:L-leucine biosynthetic process"/>
    <property type="evidence" value="ECO:0007669"/>
    <property type="project" value="UniProtKB-UniRule"/>
</dbReference>
<dbReference type="CDD" id="cd01577">
    <property type="entry name" value="IPMI_Swivel"/>
    <property type="match status" value="1"/>
</dbReference>
<dbReference type="FunFam" id="3.20.19.10:FF:000003">
    <property type="entry name" value="3-isopropylmalate dehydratase small subunit"/>
    <property type="match status" value="1"/>
</dbReference>
<dbReference type="Gene3D" id="3.20.19.10">
    <property type="entry name" value="Aconitase, domain 4"/>
    <property type="match status" value="1"/>
</dbReference>
<dbReference type="HAMAP" id="MF_01031">
    <property type="entry name" value="LeuD_type1"/>
    <property type="match status" value="1"/>
</dbReference>
<dbReference type="InterPro" id="IPR004431">
    <property type="entry name" value="3-IsopropMal_deHydase_ssu"/>
</dbReference>
<dbReference type="InterPro" id="IPR015928">
    <property type="entry name" value="Aconitase/3IPM_dehydase_swvl"/>
</dbReference>
<dbReference type="InterPro" id="IPR000573">
    <property type="entry name" value="AconitaseA/IPMdHydase_ssu_swvl"/>
</dbReference>
<dbReference type="InterPro" id="IPR033940">
    <property type="entry name" value="IPMI_Swivel"/>
</dbReference>
<dbReference type="InterPro" id="IPR050075">
    <property type="entry name" value="LeuD"/>
</dbReference>
<dbReference type="NCBIfam" id="TIGR00171">
    <property type="entry name" value="leuD"/>
    <property type="match status" value="1"/>
</dbReference>
<dbReference type="NCBIfam" id="NF002458">
    <property type="entry name" value="PRK01641.1"/>
    <property type="match status" value="1"/>
</dbReference>
<dbReference type="PANTHER" id="PTHR43345:SF5">
    <property type="entry name" value="3-ISOPROPYLMALATE DEHYDRATASE SMALL SUBUNIT"/>
    <property type="match status" value="1"/>
</dbReference>
<dbReference type="PANTHER" id="PTHR43345">
    <property type="entry name" value="3-ISOPROPYLMALATE DEHYDRATASE SMALL SUBUNIT 2-RELATED-RELATED"/>
    <property type="match status" value="1"/>
</dbReference>
<dbReference type="Pfam" id="PF00694">
    <property type="entry name" value="Aconitase_C"/>
    <property type="match status" value="1"/>
</dbReference>
<dbReference type="SUPFAM" id="SSF52016">
    <property type="entry name" value="LeuD/IlvD-like"/>
    <property type="match status" value="1"/>
</dbReference>
<feature type="chain" id="PRO_0000141783" description="3-isopropylmalate dehydratase small subunit">
    <location>
        <begin position="1"/>
        <end position="199"/>
    </location>
</feature>
<evidence type="ECO:0000250" key="1"/>
<evidence type="ECO:0000305" key="2"/>
<gene>
    <name type="primary">leuD</name>
    <name type="ordered locus">BSU28250</name>
</gene>
<reference key="1">
    <citation type="journal article" date="1996" name="Microbiology">
        <title>The dnaB-pheA (256 degrees-240 degrees) region of the Bacillus subtilis chromosome containing genes responsible for stress responses, the utilization of plant cell walls and primary metabolism.</title>
        <authorList>
            <person name="Wipat A."/>
            <person name="Carter N."/>
            <person name="Brignell C.S."/>
            <person name="Guy J.B."/>
            <person name="Piper K."/>
            <person name="Sanders J."/>
            <person name="Emmerson P.T."/>
            <person name="Harwood C.R."/>
        </authorList>
    </citation>
    <scope>NUCLEOTIDE SEQUENCE [GENOMIC DNA]</scope>
    <source>
        <strain>168</strain>
    </source>
</reference>
<reference key="2">
    <citation type="journal article" date="1997" name="Nature">
        <title>The complete genome sequence of the Gram-positive bacterium Bacillus subtilis.</title>
        <authorList>
            <person name="Kunst F."/>
            <person name="Ogasawara N."/>
            <person name="Moszer I."/>
            <person name="Albertini A.M."/>
            <person name="Alloni G."/>
            <person name="Azevedo V."/>
            <person name="Bertero M.G."/>
            <person name="Bessieres P."/>
            <person name="Bolotin A."/>
            <person name="Borchert S."/>
            <person name="Borriss R."/>
            <person name="Boursier L."/>
            <person name="Brans A."/>
            <person name="Braun M."/>
            <person name="Brignell S.C."/>
            <person name="Bron S."/>
            <person name="Brouillet S."/>
            <person name="Bruschi C.V."/>
            <person name="Caldwell B."/>
            <person name="Capuano V."/>
            <person name="Carter N.M."/>
            <person name="Choi S.-K."/>
            <person name="Codani J.-J."/>
            <person name="Connerton I.F."/>
            <person name="Cummings N.J."/>
            <person name="Daniel R.A."/>
            <person name="Denizot F."/>
            <person name="Devine K.M."/>
            <person name="Duesterhoeft A."/>
            <person name="Ehrlich S.D."/>
            <person name="Emmerson P.T."/>
            <person name="Entian K.-D."/>
            <person name="Errington J."/>
            <person name="Fabret C."/>
            <person name="Ferrari E."/>
            <person name="Foulger D."/>
            <person name="Fritz C."/>
            <person name="Fujita M."/>
            <person name="Fujita Y."/>
            <person name="Fuma S."/>
            <person name="Galizzi A."/>
            <person name="Galleron N."/>
            <person name="Ghim S.-Y."/>
            <person name="Glaser P."/>
            <person name="Goffeau A."/>
            <person name="Golightly E.J."/>
            <person name="Grandi G."/>
            <person name="Guiseppi G."/>
            <person name="Guy B.J."/>
            <person name="Haga K."/>
            <person name="Haiech J."/>
            <person name="Harwood C.R."/>
            <person name="Henaut A."/>
            <person name="Hilbert H."/>
            <person name="Holsappel S."/>
            <person name="Hosono S."/>
            <person name="Hullo M.-F."/>
            <person name="Itaya M."/>
            <person name="Jones L.-M."/>
            <person name="Joris B."/>
            <person name="Karamata D."/>
            <person name="Kasahara Y."/>
            <person name="Klaerr-Blanchard M."/>
            <person name="Klein C."/>
            <person name="Kobayashi Y."/>
            <person name="Koetter P."/>
            <person name="Koningstein G."/>
            <person name="Krogh S."/>
            <person name="Kumano M."/>
            <person name="Kurita K."/>
            <person name="Lapidus A."/>
            <person name="Lardinois S."/>
            <person name="Lauber J."/>
            <person name="Lazarevic V."/>
            <person name="Lee S.-M."/>
            <person name="Levine A."/>
            <person name="Liu H."/>
            <person name="Masuda S."/>
            <person name="Mauel C."/>
            <person name="Medigue C."/>
            <person name="Medina N."/>
            <person name="Mellado R.P."/>
            <person name="Mizuno M."/>
            <person name="Moestl D."/>
            <person name="Nakai S."/>
            <person name="Noback M."/>
            <person name="Noone D."/>
            <person name="O'Reilly M."/>
            <person name="Ogawa K."/>
            <person name="Ogiwara A."/>
            <person name="Oudega B."/>
            <person name="Park S.-H."/>
            <person name="Parro V."/>
            <person name="Pohl T.M."/>
            <person name="Portetelle D."/>
            <person name="Porwollik S."/>
            <person name="Prescott A.M."/>
            <person name="Presecan E."/>
            <person name="Pujic P."/>
            <person name="Purnelle B."/>
            <person name="Rapoport G."/>
            <person name="Rey M."/>
            <person name="Reynolds S."/>
            <person name="Rieger M."/>
            <person name="Rivolta C."/>
            <person name="Rocha E."/>
            <person name="Roche B."/>
            <person name="Rose M."/>
            <person name="Sadaie Y."/>
            <person name="Sato T."/>
            <person name="Scanlan E."/>
            <person name="Schleich S."/>
            <person name="Schroeter R."/>
            <person name="Scoffone F."/>
            <person name="Sekiguchi J."/>
            <person name="Sekowska A."/>
            <person name="Seror S.J."/>
            <person name="Serror P."/>
            <person name="Shin B.-S."/>
            <person name="Soldo B."/>
            <person name="Sorokin A."/>
            <person name="Tacconi E."/>
            <person name="Takagi T."/>
            <person name="Takahashi H."/>
            <person name="Takemaru K."/>
            <person name="Takeuchi M."/>
            <person name="Tamakoshi A."/>
            <person name="Tanaka T."/>
            <person name="Terpstra P."/>
            <person name="Tognoni A."/>
            <person name="Tosato V."/>
            <person name="Uchiyama S."/>
            <person name="Vandenbol M."/>
            <person name="Vannier F."/>
            <person name="Vassarotti A."/>
            <person name="Viari A."/>
            <person name="Wambutt R."/>
            <person name="Wedler E."/>
            <person name="Wedler H."/>
            <person name="Weitzenegger T."/>
            <person name="Winters P."/>
            <person name="Wipat A."/>
            <person name="Yamamoto H."/>
            <person name="Yamane K."/>
            <person name="Yasumoto K."/>
            <person name="Yata K."/>
            <person name="Yoshida K."/>
            <person name="Yoshikawa H.-F."/>
            <person name="Zumstein E."/>
            <person name="Yoshikawa H."/>
            <person name="Danchin A."/>
        </authorList>
    </citation>
    <scope>NUCLEOTIDE SEQUENCE [LARGE SCALE GENOMIC DNA]</scope>
    <source>
        <strain>168</strain>
    </source>
</reference>
<organism>
    <name type="scientific">Bacillus subtilis (strain 168)</name>
    <dbReference type="NCBI Taxonomy" id="224308"/>
    <lineage>
        <taxon>Bacteria</taxon>
        <taxon>Bacillati</taxon>
        <taxon>Bacillota</taxon>
        <taxon>Bacilli</taxon>
        <taxon>Bacillales</taxon>
        <taxon>Bacillaceae</taxon>
        <taxon>Bacillus</taxon>
    </lineage>
</organism>
<keyword id="KW-0028">Amino-acid biosynthesis</keyword>
<keyword id="KW-0100">Branched-chain amino acid biosynthesis</keyword>
<keyword id="KW-0432">Leucine biosynthesis</keyword>
<keyword id="KW-0456">Lyase</keyword>
<keyword id="KW-1185">Reference proteome</keyword>
<name>LEUD_BACSU</name>
<proteinExistence type="inferred from homology"/>